<keyword id="KW-0378">Hydrolase</keyword>
<keyword id="KW-0441">Lipid A biosynthesis</keyword>
<keyword id="KW-0444">Lipid biosynthesis</keyword>
<keyword id="KW-0443">Lipid metabolism</keyword>
<keyword id="KW-0479">Metal-binding</keyword>
<keyword id="KW-0862">Zinc</keyword>
<dbReference type="EC" id="3.5.1.108" evidence="1"/>
<dbReference type="EMBL" id="CP000243">
    <property type="protein sequence ID" value="ABE05615.1"/>
    <property type="molecule type" value="Genomic_DNA"/>
</dbReference>
<dbReference type="RefSeq" id="WP_000595482.1">
    <property type="nucleotide sequence ID" value="NZ_CP064825.1"/>
</dbReference>
<dbReference type="SMR" id="Q1RG99"/>
<dbReference type="GeneID" id="93777338"/>
<dbReference type="KEGG" id="eci:UTI89_C0105"/>
<dbReference type="HOGENOM" id="CLU_046528_1_0_6"/>
<dbReference type="UniPathway" id="UPA00359">
    <property type="reaction ID" value="UER00478"/>
</dbReference>
<dbReference type="Proteomes" id="UP000001952">
    <property type="component" value="Chromosome"/>
</dbReference>
<dbReference type="GO" id="GO:0016020">
    <property type="term" value="C:membrane"/>
    <property type="evidence" value="ECO:0007669"/>
    <property type="project" value="GOC"/>
</dbReference>
<dbReference type="GO" id="GO:0046872">
    <property type="term" value="F:metal ion binding"/>
    <property type="evidence" value="ECO:0007669"/>
    <property type="project" value="UniProtKB-KW"/>
</dbReference>
<dbReference type="GO" id="GO:0103117">
    <property type="term" value="F:UDP-3-O-acyl-N-acetylglucosamine deacetylase activity"/>
    <property type="evidence" value="ECO:0007669"/>
    <property type="project" value="UniProtKB-UniRule"/>
</dbReference>
<dbReference type="GO" id="GO:0009245">
    <property type="term" value="P:lipid A biosynthetic process"/>
    <property type="evidence" value="ECO:0007669"/>
    <property type="project" value="UniProtKB-UniRule"/>
</dbReference>
<dbReference type="FunFam" id="3.30.1700.10:FF:000001">
    <property type="entry name" value="UDP-3-O-acyl-N-acetylglucosamine deacetylase"/>
    <property type="match status" value="1"/>
</dbReference>
<dbReference type="FunFam" id="3.30.230.20:FF:000001">
    <property type="entry name" value="UDP-3-O-acyl-N-acetylglucosamine deacetylase"/>
    <property type="match status" value="1"/>
</dbReference>
<dbReference type="Gene3D" id="3.30.230.20">
    <property type="entry name" value="lpxc deacetylase, domain 1"/>
    <property type="match status" value="1"/>
</dbReference>
<dbReference type="Gene3D" id="3.30.1700.10">
    <property type="entry name" value="lpxc deacetylase, domain 2"/>
    <property type="match status" value="1"/>
</dbReference>
<dbReference type="HAMAP" id="MF_00388">
    <property type="entry name" value="LpxC"/>
    <property type="match status" value="1"/>
</dbReference>
<dbReference type="InterPro" id="IPR020568">
    <property type="entry name" value="Ribosomal_Su5_D2-typ_SF"/>
</dbReference>
<dbReference type="InterPro" id="IPR004463">
    <property type="entry name" value="UDP-acyl_GlcNac_deAcase"/>
</dbReference>
<dbReference type="InterPro" id="IPR011334">
    <property type="entry name" value="UDP-acyl_GlcNac_deAcase_C"/>
</dbReference>
<dbReference type="InterPro" id="IPR015870">
    <property type="entry name" value="UDP-acyl_N-AcGlcN_deAcase_N"/>
</dbReference>
<dbReference type="NCBIfam" id="TIGR00325">
    <property type="entry name" value="lpxC"/>
    <property type="match status" value="1"/>
</dbReference>
<dbReference type="PANTHER" id="PTHR33694">
    <property type="entry name" value="UDP-3-O-ACYL-N-ACETYLGLUCOSAMINE DEACETYLASE 1, MITOCHONDRIAL-RELATED"/>
    <property type="match status" value="1"/>
</dbReference>
<dbReference type="PANTHER" id="PTHR33694:SF1">
    <property type="entry name" value="UDP-3-O-ACYL-N-ACETYLGLUCOSAMINE DEACETYLASE 1, MITOCHONDRIAL-RELATED"/>
    <property type="match status" value="1"/>
</dbReference>
<dbReference type="Pfam" id="PF03331">
    <property type="entry name" value="LpxC"/>
    <property type="match status" value="1"/>
</dbReference>
<dbReference type="SUPFAM" id="SSF54211">
    <property type="entry name" value="Ribosomal protein S5 domain 2-like"/>
    <property type="match status" value="2"/>
</dbReference>
<name>LPXC_ECOUT</name>
<evidence type="ECO:0000255" key="1">
    <source>
        <dbReference type="HAMAP-Rule" id="MF_00388"/>
    </source>
</evidence>
<proteinExistence type="inferred from homology"/>
<feature type="chain" id="PRO_0000253665" description="UDP-3-O-acyl-N-acetylglucosamine deacetylase">
    <location>
        <begin position="1"/>
        <end position="305"/>
    </location>
</feature>
<feature type="active site" description="Proton donor" evidence="1">
    <location>
        <position position="265"/>
    </location>
</feature>
<feature type="binding site" evidence="1">
    <location>
        <position position="79"/>
    </location>
    <ligand>
        <name>Zn(2+)</name>
        <dbReference type="ChEBI" id="CHEBI:29105"/>
    </ligand>
</feature>
<feature type="binding site" evidence="1">
    <location>
        <position position="238"/>
    </location>
    <ligand>
        <name>Zn(2+)</name>
        <dbReference type="ChEBI" id="CHEBI:29105"/>
    </ligand>
</feature>
<feature type="binding site" evidence="1">
    <location>
        <position position="242"/>
    </location>
    <ligand>
        <name>Zn(2+)</name>
        <dbReference type="ChEBI" id="CHEBI:29105"/>
    </ligand>
</feature>
<reference key="1">
    <citation type="journal article" date="2006" name="Proc. Natl. Acad. Sci. U.S.A.">
        <title>Identification of genes subject to positive selection in uropathogenic strains of Escherichia coli: a comparative genomics approach.</title>
        <authorList>
            <person name="Chen S.L."/>
            <person name="Hung C.-S."/>
            <person name="Xu J."/>
            <person name="Reigstad C.S."/>
            <person name="Magrini V."/>
            <person name="Sabo A."/>
            <person name="Blasiar D."/>
            <person name="Bieri T."/>
            <person name="Meyer R.R."/>
            <person name="Ozersky P."/>
            <person name="Armstrong J.R."/>
            <person name="Fulton R.S."/>
            <person name="Latreille J.P."/>
            <person name="Spieth J."/>
            <person name="Hooton T.M."/>
            <person name="Mardis E.R."/>
            <person name="Hultgren S.J."/>
            <person name="Gordon J.I."/>
        </authorList>
    </citation>
    <scope>NUCLEOTIDE SEQUENCE [LARGE SCALE GENOMIC DNA]</scope>
    <source>
        <strain>UTI89 / UPEC</strain>
    </source>
</reference>
<organism>
    <name type="scientific">Escherichia coli (strain UTI89 / UPEC)</name>
    <dbReference type="NCBI Taxonomy" id="364106"/>
    <lineage>
        <taxon>Bacteria</taxon>
        <taxon>Pseudomonadati</taxon>
        <taxon>Pseudomonadota</taxon>
        <taxon>Gammaproteobacteria</taxon>
        <taxon>Enterobacterales</taxon>
        <taxon>Enterobacteriaceae</taxon>
        <taxon>Escherichia</taxon>
    </lineage>
</organism>
<comment type="function">
    <text evidence="1">Catalyzes the hydrolysis of UDP-3-O-myristoyl-N-acetylglucosamine to form UDP-3-O-myristoylglucosamine and acetate, the committed step in lipid A biosynthesis.</text>
</comment>
<comment type="catalytic activity">
    <reaction evidence="1">
        <text>a UDP-3-O-[(3R)-3-hydroxyacyl]-N-acetyl-alpha-D-glucosamine + H2O = a UDP-3-O-[(3R)-3-hydroxyacyl]-alpha-D-glucosamine + acetate</text>
        <dbReference type="Rhea" id="RHEA:67816"/>
        <dbReference type="ChEBI" id="CHEBI:15377"/>
        <dbReference type="ChEBI" id="CHEBI:30089"/>
        <dbReference type="ChEBI" id="CHEBI:137740"/>
        <dbReference type="ChEBI" id="CHEBI:173225"/>
        <dbReference type="EC" id="3.5.1.108"/>
    </reaction>
</comment>
<comment type="cofactor">
    <cofactor evidence="1">
        <name>Zn(2+)</name>
        <dbReference type="ChEBI" id="CHEBI:29105"/>
    </cofactor>
</comment>
<comment type="pathway">
    <text evidence="1">Glycolipid biosynthesis; lipid IV(A) biosynthesis; lipid IV(A) from (3R)-3-hydroxytetradecanoyl-[acyl-carrier-protein] and UDP-N-acetyl-alpha-D-glucosamine: step 2/6.</text>
</comment>
<comment type="similarity">
    <text evidence="1">Belongs to the LpxC family.</text>
</comment>
<accession>Q1RG99</accession>
<protein>
    <recommendedName>
        <fullName evidence="1">UDP-3-O-acyl-N-acetylglucosamine deacetylase</fullName>
        <shortName evidence="1">UDP-3-O-acyl-GlcNAc deacetylase</shortName>
        <ecNumber evidence="1">3.5.1.108</ecNumber>
    </recommendedName>
    <alternativeName>
        <fullName evidence="1">UDP-3-O-[R-3-hydroxymyristoyl]-N-acetylglucosamine deacetylase</fullName>
    </alternativeName>
</protein>
<sequence>MIKQRTLKRIVQATGVGLHTGKKVTLTLRPAPANTGVIYRRTDLNPPVDFPADAKSVRDTMLCTCLVNEHDVRISTVEHLNAALAGLGIDNIVIEVNAPEIPIMDGSAAPFVYLLLDAGIDELNCAKKFVRIKETVRVEDGDKWAEFKPYNGFSLDFTIDFNHPAIDSSNQRYAMNFSADAFMRQISRARTFGFMRDIEYLQSRGLCLGGSFDCAIVVDDYRVLNEDGLRFEDEFVRHKMLDAIGDLFMCGHNIIGAFTAYKSGHALNNKLLQAVLAKQEAWEYVTFQDDAELPLAFKAPSAVLA</sequence>
<gene>
    <name evidence="1" type="primary">lpxC</name>
    <name type="ordered locus">UTI89_C0105</name>
</gene>